<evidence type="ECO:0000250" key="1"/>
<evidence type="ECO:0000250" key="2">
    <source>
        <dbReference type="UniProtKB" id="Q13616"/>
    </source>
</evidence>
<evidence type="ECO:0000250" key="3">
    <source>
        <dbReference type="UniProtKB" id="Q13620"/>
    </source>
</evidence>
<evidence type="ECO:0000255" key="4"/>
<evidence type="ECO:0000255" key="5">
    <source>
        <dbReference type="PROSITE-ProRule" id="PRU00330"/>
    </source>
</evidence>
<evidence type="ECO:0000256" key="6">
    <source>
        <dbReference type="SAM" id="MobiDB-lite"/>
    </source>
</evidence>
<reference key="1">
    <citation type="journal article" date="2005" name="Nature">
        <title>The genome of the social amoeba Dictyostelium discoideum.</title>
        <authorList>
            <person name="Eichinger L."/>
            <person name="Pachebat J.A."/>
            <person name="Gloeckner G."/>
            <person name="Rajandream M.A."/>
            <person name="Sucgang R."/>
            <person name="Berriman M."/>
            <person name="Song J."/>
            <person name="Olsen R."/>
            <person name="Szafranski K."/>
            <person name="Xu Q."/>
            <person name="Tunggal B."/>
            <person name="Kummerfeld S."/>
            <person name="Madera M."/>
            <person name="Konfortov B.A."/>
            <person name="Rivero F."/>
            <person name="Bankier A.T."/>
            <person name="Lehmann R."/>
            <person name="Hamlin N."/>
            <person name="Davies R."/>
            <person name="Gaudet P."/>
            <person name="Fey P."/>
            <person name="Pilcher K."/>
            <person name="Chen G."/>
            <person name="Saunders D."/>
            <person name="Sodergren E.J."/>
            <person name="Davis P."/>
            <person name="Kerhornou A."/>
            <person name="Nie X."/>
            <person name="Hall N."/>
            <person name="Anjard C."/>
            <person name="Hemphill L."/>
            <person name="Bason N."/>
            <person name="Farbrother P."/>
            <person name="Desany B."/>
            <person name="Just E."/>
            <person name="Morio T."/>
            <person name="Rost R."/>
            <person name="Churcher C.M."/>
            <person name="Cooper J."/>
            <person name="Haydock S."/>
            <person name="van Driessche N."/>
            <person name="Cronin A."/>
            <person name="Goodhead I."/>
            <person name="Muzny D.M."/>
            <person name="Mourier T."/>
            <person name="Pain A."/>
            <person name="Lu M."/>
            <person name="Harper D."/>
            <person name="Lindsay R."/>
            <person name="Hauser H."/>
            <person name="James K.D."/>
            <person name="Quiles M."/>
            <person name="Madan Babu M."/>
            <person name="Saito T."/>
            <person name="Buchrieser C."/>
            <person name="Wardroper A."/>
            <person name="Felder M."/>
            <person name="Thangavelu M."/>
            <person name="Johnson D."/>
            <person name="Knights A."/>
            <person name="Loulseged H."/>
            <person name="Mungall K.L."/>
            <person name="Oliver K."/>
            <person name="Price C."/>
            <person name="Quail M.A."/>
            <person name="Urushihara H."/>
            <person name="Hernandez J."/>
            <person name="Rabbinowitsch E."/>
            <person name="Steffen D."/>
            <person name="Sanders M."/>
            <person name="Ma J."/>
            <person name="Kohara Y."/>
            <person name="Sharp S."/>
            <person name="Simmonds M.N."/>
            <person name="Spiegler S."/>
            <person name="Tivey A."/>
            <person name="Sugano S."/>
            <person name="White B."/>
            <person name="Walker D."/>
            <person name="Woodward J.R."/>
            <person name="Winckler T."/>
            <person name="Tanaka Y."/>
            <person name="Shaulsky G."/>
            <person name="Schleicher M."/>
            <person name="Weinstock G.M."/>
            <person name="Rosenthal A."/>
            <person name="Cox E.C."/>
            <person name="Chisholm R.L."/>
            <person name="Gibbs R.A."/>
            <person name="Loomis W.F."/>
            <person name="Platzer M."/>
            <person name="Kay R.R."/>
            <person name="Williams J.G."/>
            <person name="Dear P.H."/>
            <person name="Noegel A.A."/>
            <person name="Barrell B.G."/>
            <person name="Kuspa A."/>
        </authorList>
    </citation>
    <scope>NUCLEOTIDE SEQUENCE [LARGE SCALE GENOMIC DNA]</scope>
    <source>
        <strain>AX4</strain>
    </source>
</reference>
<sequence>MNFNNNNNNNNNNNNNNNLNNNNNNVNNINNNNKKPLTNSLAGTPPAKKILVIKNLKQIPKTPDNYEDSSWNKLSSAITSINMKQATTLTQEELYKMVENLCFDKILASNLYNKISVQIEKHITLTIKHLVLTMSSDPIIFLKSINSIWKDHTNQMIMIRSIFLYLDRTYVIQNSNTVKSIWDLGLFYFGNNLSQQSNLERKTIDSLLYSIRCEREGDEIDRDLIHSLVKMLSSLNIYTKFEIEFIKETNRFYDMEGNSKINEIETPMYLKYVCERLNQEGERLMRYLEQSTKKQLMAVLDRQLIERHVDVILEKGFNAMVNGDRLEDLGKLYQLLNSVGEIKKIKESWQSYIKQTGIQMLNDKEKEATLIQDLLDYKDRLDRILSQSFSKNELLTYALKESFEYFINTKQNKPAELVARFIDSKLKVGGKRMSEEELETVLNKSLILFRYIQGKDVFEAFYKQDLSKRLLLDKSTSIDAEKSMISKLKTECGTTFTAKLEEMFKDIELSNDIMNSFRDSPMTQNFKSIEMNIYVLTSGNWPIQPPIEATLPKEFLEYQEVFNKFYLSKHNGKTLKWQNALSYCVLKANFIQGKKELSVSLFQTIILYLFNDVIDGGELSFRDIQANTGLAIPELKKNLLSLCSSKSDILIQKKSSTSSNTSSNTSSNTSSSASGSASGGASGGATKTKVIDETDTFLFNSKFSSKLFKIKVNSIQIQETVEENQKTNENIISDRQYQVDAAIVRIMKTRKTLAHNLLISELVSLLKFQPKPVDLKKRIEILIEKEYLCRDPENAMIYNYMA</sequence>
<feature type="chain" id="PRO_0000345012" description="Cullin-4">
    <location>
        <begin position="1"/>
        <end position="802"/>
    </location>
</feature>
<feature type="domain" description="Cullin neddylation" evidence="4">
    <location>
        <begin position="734"/>
        <end position="794"/>
    </location>
</feature>
<feature type="region of interest" description="Disordered" evidence="6">
    <location>
        <begin position="1"/>
        <end position="43"/>
    </location>
</feature>
<feature type="region of interest" description="Disordered" evidence="6">
    <location>
        <begin position="656"/>
        <end position="686"/>
    </location>
</feature>
<feature type="compositionally biased region" description="Low complexity" evidence="6">
    <location>
        <begin position="1"/>
        <end position="33"/>
    </location>
</feature>
<feature type="compositionally biased region" description="Low complexity" evidence="6">
    <location>
        <begin position="656"/>
        <end position="676"/>
    </location>
</feature>
<feature type="cross-link" description="Glycyl lysine isopeptide (Lys-Gly) (interchain with G-Cter in NEDD8)" evidence="2">
    <location>
        <position position="748"/>
    </location>
</feature>
<name>CUL4_DICDI</name>
<accession>Q54CS2</accession>
<proteinExistence type="inferred from homology"/>
<comment type="function">
    <text evidence="1">Probable core component of cullin-based SCF-like E3 ubiquitin-protein ligase complexes which mediate the ubiquitination and subsequent proteasomal degradation of target proteins. The E3 ubiquitin-protein ligase activity of the complex is dependent on the neddylation of the cullin subunit (By similarity).</text>
</comment>
<comment type="pathway">
    <text>Protein modification; protein ubiquitination.</text>
</comment>
<comment type="PTM">
    <text evidence="3">Neddylated. Deneddylated via its interaction with the COP9 signalosome (CSN) complex.</text>
</comment>
<comment type="similarity">
    <text evidence="5">Belongs to the cullin family.</text>
</comment>
<keyword id="KW-1017">Isopeptide bond</keyword>
<keyword id="KW-1185">Reference proteome</keyword>
<keyword id="KW-0832">Ubl conjugation</keyword>
<keyword id="KW-0833">Ubl conjugation pathway</keyword>
<protein>
    <recommendedName>
        <fullName>Cullin-4</fullName>
        <shortName>CUL-4</shortName>
    </recommendedName>
    <alternativeName>
        <fullName>Cullin-D</fullName>
    </alternativeName>
</protein>
<gene>
    <name type="primary">culD</name>
    <name type="synonym">cul4</name>
    <name type="ORF">DDB_G0292794</name>
</gene>
<organism>
    <name type="scientific">Dictyostelium discoideum</name>
    <name type="common">Social amoeba</name>
    <dbReference type="NCBI Taxonomy" id="44689"/>
    <lineage>
        <taxon>Eukaryota</taxon>
        <taxon>Amoebozoa</taxon>
        <taxon>Evosea</taxon>
        <taxon>Eumycetozoa</taxon>
        <taxon>Dictyostelia</taxon>
        <taxon>Dictyosteliales</taxon>
        <taxon>Dictyosteliaceae</taxon>
        <taxon>Dictyostelium</taxon>
    </lineage>
</organism>
<dbReference type="EMBL" id="AAFI02000196">
    <property type="protein sequence ID" value="EAL61071.1"/>
    <property type="molecule type" value="Genomic_DNA"/>
</dbReference>
<dbReference type="RefSeq" id="XP_629469.1">
    <property type="nucleotide sequence ID" value="XM_629467.1"/>
</dbReference>
<dbReference type="SMR" id="Q54CS2"/>
<dbReference type="FunCoup" id="Q54CS2">
    <property type="interactions" value="945"/>
</dbReference>
<dbReference type="STRING" id="44689.Q54CS2"/>
<dbReference type="PaxDb" id="44689-DDB0266743"/>
<dbReference type="EnsemblProtists" id="EAL61071">
    <property type="protein sequence ID" value="EAL61071"/>
    <property type="gene ID" value="DDB_G0292794"/>
</dbReference>
<dbReference type="GeneID" id="8628859"/>
<dbReference type="KEGG" id="ddi:DDB_G0292794"/>
<dbReference type="dictyBase" id="DDB_G0292794">
    <property type="gene designation" value="culD"/>
</dbReference>
<dbReference type="VEuPathDB" id="AmoebaDB:DDB_G0292794"/>
<dbReference type="eggNOG" id="KOG2167">
    <property type="taxonomic scope" value="Eukaryota"/>
</dbReference>
<dbReference type="HOGENOM" id="CLU_004747_7_2_1"/>
<dbReference type="InParanoid" id="Q54CS2"/>
<dbReference type="OMA" id="NYQEQTW"/>
<dbReference type="PhylomeDB" id="Q54CS2"/>
<dbReference type="Reactome" id="R-DDI-110314">
    <property type="pathway name" value="Recognition of DNA damage by PCNA-containing replication complex"/>
</dbReference>
<dbReference type="Reactome" id="R-DDI-5696394">
    <property type="pathway name" value="DNA Damage Recognition in GG-NER"/>
</dbReference>
<dbReference type="Reactome" id="R-DDI-5696395">
    <property type="pathway name" value="Formation of Incision Complex in GG-NER"/>
</dbReference>
<dbReference type="Reactome" id="R-DDI-6781823">
    <property type="pathway name" value="Formation of TC-NER Pre-Incision Complex"/>
</dbReference>
<dbReference type="Reactome" id="R-DDI-6782135">
    <property type="pathway name" value="Dual incision in TC-NER"/>
</dbReference>
<dbReference type="Reactome" id="R-DDI-6782210">
    <property type="pathway name" value="Gap-filling DNA repair synthesis and ligation in TC-NER"/>
</dbReference>
<dbReference type="Reactome" id="R-DDI-8951664">
    <property type="pathway name" value="Neddylation"/>
</dbReference>
<dbReference type="UniPathway" id="UPA00143"/>
<dbReference type="PRO" id="PR:Q54CS2"/>
<dbReference type="Proteomes" id="UP000002195">
    <property type="component" value="Chromosome 6"/>
</dbReference>
<dbReference type="GO" id="GO:0080008">
    <property type="term" value="C:Cul4-RING E3 ubiquitin ligase complex"/>
    <property type="evidence" value="ECO:0000318"/>
    <property type="project" value="GO_Central"/>
</dbReference>
<dbReference type="GO" id="GO:0005634">
    <property type="term" value="C:nucleus"/>
    <property type="evidence" value="ECO:0000314"/>
    <property type="project" value="dictyBase"/>
</dbReference>
<dbReference type="GO" id="GO:0031625">
    <property type="term" value="F:ubiquitin protein ligase binding"/>
    <property type="evidence" value="ECO:0000318"/>
    <property type="project" value="GO_Central"/>
</dbReference>
<dbReference type="GO" id="GO:0006974">
    <property type="term" value="P:DNA damage response"/>
    <property type="evidence" value="ECO:0000318"/>
    <property type="project" value="GO_Central"/>
</dbReference>
<dbReference type="GO" id="GO:0016567">
    <property type="term" value="P:protein ubiquitination"/>
    <property type="evidence" value="ECO:0000318"/>
    <property type="project" value="GO_Central"/>
</dbReference>
<dbReference type="GO" id="GO:0006511">
    <property type="term" value="P:ubiquitin-dependent protein catabolic process"/>
    <property type="evidence" value="ECO:0007669"/>
    <property type="project" value="InterPro"/>
</dbReference>
<dbReference type="FunFam" id="1.20.1310.10:FF:000001">
    <property type="entry name" value="Cullin 3"/>
    <property type="match status" value="1"/>
</dbReference>
<dbReference type="FunFam" id="1.10.10.10:FF:000050">
    <property type="entry name" value="Cullin 4B"/>
    <property type="match status" value="1"/>
</dbReference>
<dbReference type="FunFam" id="1.20.1310.10:FF:000004">
    <property type="entry name" value="Cullin 4B"/>
    <property type="match status" value="1"/>
</dbReference>
<dbReference type="FunFam" id="3.30.230.130:FF:000030">
    <property type="entry name" value="Cullin-4"/>
    <property type="match status" value="1"/>
</dbReference>
<dbReference type="FunFam" id="1.20.1310.10:FF:000024">
    <property type="entry name" value="Cullin-4 like"/>
    <property type="match status" value="1"/>
</dbReference>
<dbReference type="FunFam" id="1.20.1310.10:FF:000035">
    <property type="entry name" value="Ubiquitin ligase subunit CulD, putative"/>
    <property type="match status" value="1"/>
</dbReference>
<dbReference type="Gene3D" id="1.20.1310.10">
    <property type="entry name" value="Cullin Repeats"/>
    <property type="match status" value="4"/>
</dbReference>
<dbReference type="Gene3D" id="3.30.230.130">
    <property type="entry name" value="Cullin, Chain C, Domain 2"/>
    <property type="match status" value="1"/>
</dbReference>
<dbReference type="Gene3D" id="1.10.10.10">
    <property type="entry name" value="Winged helix-like DNA-binding domain superfamily/Winged helix DNA-binding domain"/>
    <property type="match status" value="1"/>
</dbReference>
<dbReference type="InterPro" id="IPR045093">
    <property type="entry name" value="Cullin"/>
</dbReference>
<dbReference type="InterPro" id="IPR016157">
    <property type="entry name" value="Cullin_CS"/>
</dbReference>
<dbReference type="InterPro" id="IPR016158">
    <property type="entry name" value="Cullin_homology"/>
</dbReference>
<dbReference type="InterPro" id="IPR036317">
    <property type="entry name" value="Cullin_homology_sf"/>
</dbReference>
<dbReference type="InterPro" id="IPR001373">
    <property type="entry name" value="Cullin_N"/>
</dbReference>
<dbReference type="InterPro" id="IPR019559">
    <property type="entry name" value="Cullin_neddylation_domain"/>
</dbReference>
<dbReference type="InterPro" id="IPR016159">
    <property type="entry name" value="Cullin_repeat-like_dom_sf"/>
</dbReference>
<dbReference type="InterPro" id="IPR036388">
    <property type="entry name" value="WH-like_DNA-bd_sf"/>
</dbReference>
<dbReference type="InterPro" id="IPR036390">
    <property type="entry name" value="WH_DNA-bd_sf"/>
</dbReference>
<dbReference type="PANTHER" id="PTHR11932">
    <property type="entry name" value="CULLIN"/>
    <property type="match status" value="1"/>
</dbReference>
<dbReference type="Pfam" id="PF00888">
    <property type="entry name" value="Cullin"/>
    <property type="match status" value="1"/>
</dbReference>
<dbReference type="Pfam" id="PF10557">
    <property type="entry name" value="Cullin_Nedd8"/>
    <property type="match status" value="1"/>
</dbReference>
<dbReference type="SMART" id="SM00182">
    <property type="entry name" value="CULLIN"/>
    <property type="match status" value="1"/>
</dbReference>
<dbReference type="SMART" id="SM00884">
    <property type="entry name" value="Cullin_Nedd8"/>
    <property type="match status" value="1"/>
</dbReference>
<dbReference type="SUPFAM" id="SSF75632">
    <property type="entry name" value="Cullin homology domain"/>
    <property type="match status" value="1"/>
</dbReference>
<dbReference type="SUPFAM" id="SSF74788">
    <property type="entry name" value="Cullin repeat-like"/>
    <property type="match status" value="1"/>
</dbReference>
<dbReference type="SUPFAM" id="SSF46785">
    <property type="entry name" value="Winged helix' DNA-binding domain"/>
    <property type="match status" value="1"/>
</dbReference>
<dbReference type="PROSITE" id="PS01256">
    <property type="entry name" value="CULLIN_1"/>
    <property type="match status" value="1"/>
</dbReference>
<dbReference type="PROSITE" id="PS50069">
    <property type="entry name" value="CULLIN_2"/>
    <property type="match status" value="1"/>
</dbReference>